<gene>
    <name type="primary">MT-CO3</name>
    <name type="synonym">COIII</name>
    <name type="synonym">COXIII</name>
    <name type="synonym">MTCO3</name>
</gene>
<geneLocation type="mitochondrion"/>
<name>COX3_RAPCA</name>
<proteinExistence type="inferred from homology"/>
<sequence length="261" mass="29849">MTHQTHAYHMVNPSPWPLTGALSALLMTSGLAMWFHFNSTILLMIGLTTNTLTMYQWWRDVIRESTFQGHHTPTVQKGLRYGMILFIISEVLFFTGFFWAFYHSSLAPTPELGGCWPPTGIHPLNPLEVPLLNTSVLLASGVSITWAHHSLMEGNRYPMLQALFITIALGVYFTLLQASEYYEAPFTISDGVYGSTFFVATGFHGLHVIIGSTFLIVCFFRQLKFHFTSNHHFGFEAAAWYWHFVDVVWLFLYVSIYWWGS</sequence>
<protein>
    <recommendedName>
        <fullName>Cytochrome c oxidase subunit 3</fullName>
        <ecNumber>7.1.1.9</ecNumber>
    </recommendedName>
    <alternativeName>
        <fullName>Cytochrome c oxidase polypeptide III</fullName>
    </alternativeName>
</protein>
<feature type="chain" id="PRO_0000183842" description="Cytochrome c oxidase subunit 3">
    <location>
        <begin position="1"/>
        <end position="261"/>
    </location>
</feature>
<feature type="topological domain" description="Mitochondrial matrix" evidence="1">
    <location>
        <begin position="1"/>
        <end position="15"/>
    </location>
</feature>
<feature type="transmembrane region" description="Helical; Name=I" evidence="1">
    <location>
        <begin position="16"/>
        <end position="34"/>
    </location>
</feature>
<feature type="topological domain" description="Mitochondrial intermembrane" evidence="1">
    <location>
        <begin position="35"/>
        <end position="40"/>
    </location>
</feature>
<feature type="transmembrane region" description="Helical; Name=II" evidence="1">
    <location>
        <begin position="41"/>
        <end position="66"/>
    </location>
</feature>
<feature type="topological domain" description="Mitochondrial matrix" evidence="1">
    <location>
        <begin position="67"/>
        <end position="72"/>
    </location>
</feature>
<feature type="transmembrane region" description="Helical; Name=III" evidence="1">
    <location>
        <begin position="73"/>
        <end position="105"/>
    </location>
</feature>
<feature type="topological domain" description="Mitochondrial intermembrane" evidence="1">
    <location>
        <begin position="106"/>
        <end position="128"/>
    </location>
</feature>
<feature type="transmembrane region" description="Helical; Name=IV" evidence="1">
    <location>
        <begin position="129"/>
        <end position="152"/>
    </location>
</feature>
<feature type="topological domain" description="Mitochondrial matrix" evidence="1">
    <location>
        <begin position="153"/>
        <end position="155"/>
    </location>
</feature>
<feature type="transmembrane region" description="Helical; Name=V" evidence="1">
    <location>
        <begin position="156"/>
        <end position="183"/>
    </location>
</feature>
<feature type="topological domain" description="Mitochondrial intermembrane" evidence="1">
    <location>
        <begin position="184"/>
        <end position="190"/>
    </location>
</feature>
<feature type="transmembrane region" description="Helical; Name=VI" evidence="1">
    <location>
        <begin position="191"/>
        <end position="223"/>
    </location>
</feature>
<feature type="topological domain" description="Mitochondrial matrix" evidence="1">
    <location>
        <begin position="224"/>
        <end position="232"/>
    </location>
</feature>
<feature type="transmembrane region" description="Helical; Name=VII" evidence="1">
    <location>
        <begin position="233"/>
        <end position="256"/>
    </location>
</feature>
<feature type="topological domain" description="Mitochondrial intermembrane" evidence="1">
    <location>
        <begin position="257"/>
        <end position="261"/>
    </location>
</feature>
<organism>
    <name type="scientific">Raphicerus campestris</name>
    <name type="common">Steenbok</name>
    <dbReference type="NCBI Taxonomy" id="59544"/>
    <lineage>
        <taxon>Eukaryota</taxon>
        <taxon>Metazoa</taxon>
        <taxon>Chordata</taxon>
        <taxon>Craniata</taxon>
        <taxon>Vertebrata</taxon>
        <taxon>Euteleostomi</taxon>
        <taxon>Mammalia</taxon>
        <taxon>Eutheria</taxon>
        <taxon>Laurasiatheria</taxon>
        <taxon>Artiodactyla</taxon>
        <taxon>Ruminantia</taxon>
        <taxon>Pecora</taxon>
        <taxon>Bovidae</taxon>
        <taxon>Antilopinae</taxon>
        <taxon>Raphicerus</taxon>
    </lineage>
</organism>
<reference key="1">
    <citation type="journal article" date="1999" name="Mol. Phylogenet. Evol.">
        <title>Phylogenetic relationships in the bovid subfamily Antilopinae based on mitochondrial DNA sequences.</title>
        <authorList>
            <person name="Rebholz W.E.R."/>
            <person name="Harley E.H."/>
        </authorList>
    </citation>
    <scope>NUCLEOTIDE SEQUENCE [GENOMIC DNA]</scope>
</reference>
<keyword id="KW-0472">Membrane</keyword>
<keyword id="KW-0496">Mitochondrion</keyword>
<keyword id="KW-0999">Mitochondrion inner membrane</keyword>
<keyword id="KW-1278">Translocase</keyword>
<keyword id="KW-0812">Transmembrane</keyword>
<keyword id="KW-1133">Transmembrane helix</keyword>
<comment type="function">
    <text evidence="2">Component of the cytochrome c oxidase, the last enzyme in the mitochondrial electron transport chain which drives oxidative phosphorylation. The respiratory chain contains 3 multisubunit complexes succinate dehydrogenase (complex II, CII), ubiquinol-cytochrome c oxidoreductase (cytochrome b-c1 complex, complex III, CIII) and cytochrome c oxidase (complex IV, CIV), that cooperate to transfer electrons derived from NADH and succinate to molecular oxygen, creating an electrochemical gradient over the inner membrane that drives transmembrane transport and the ATP synthase. Cytochrome c oxidase is the component of the respiratory chain that catalyzes the reduction of oxygen to water. Electrons originating from reduced cytochrome c in the intermembrane space (IMS) are transferred via the dinuclear copper A center (CU(A)) of subunit 2 and heme A of subunit 1 to the active site in subunit 1, a binuclear center (BNC) formed by heme A3 and copper B (CU(B)). The BNC reduces molecular oxygen to 2 water molecules using 4 electrons from cytochrome c in the IMS and 4 protons from the mitochondrial matrix.</text>
</comment>
<comment type="catalytic activity">
    <reaction evidence="2">
        <text>4 Fe(II)-[cytochrome c] + O2 + 8 H(+)(in) = 4 Fe(III)-[cytochrome c] + 2 H2O + 4 H(+)(out)</text>
        <dbReference type="Rhea" id="RHEA:11436"/>
        <dbReference type="Rhea" id="RHEA-COMP:10350"/>
        <dbReference type="Rhea" id="RHEA-COMP:14399"/>
        <dbReference type="ChEBI" id="CHEBI:15377"/>
        <dbReference type="ChEBI" id="CHEBI:15378"/>
        <dbReference type="ChEBI" id="CHEBI:15379"/>
        <dbReference type="ChEBI" id="CHEBI:29033"/>
        <dbReference type="ChEBI" id="CHEBI:29034"/>
        <dbReference type="EC" id="7.1.1.9"/>
    </reaction>
    <physiologicalReaction direction="left-to-right" evidence="2">
        <dbReference type="Rhea" id="RHEA:11437"/>
    </physiologicalReaction>
</comment>
<comment type="subunit">
    <text evidence="1">Component of the cytochrome c oxidase (complex IV, CIV), a multisubunit enzyme composed of 14 subunits. The complex is composed of a catalytic core of 3 subunits MT-CO1, MT-CO2 and MT-CO3, encoded in the mitochondrial DNA, and 11 supernumerary subunits COX4I, COX5A, COX5B, COX6A, COX6B, COX6C, COX7A, COX7B, COX7C, COX8 and NDUFA4, which are encoded in the nuclear genome. The complex exists as a monomer or a dimer and forms supercomplexes (SCs) in the inner mitochondrial membrane with NADH-ubiquinone oxidoreductase (complex I, CI) and ubiquinol-cytochrome c oxidoreductase (cytochrome b-c1 complex, complex III, CIII), resulting in different assemblies (supercomplex SCI(1)III(2)IV(1) and megacomplex MCI(2)III(2)IV(2)).</text>
</comment>
<comment type="subcellular location">
    <subcellularLocation>
        <location evidence="1">Mitochondrion inner membrane</location>
        <topology evidence="1">Multi-pass membrane protein</topology>
    </subcellularLocation>
</comment>
<comment type="similarity">
    <text evidence="3">Belongs to the cytochrome c oxidase subunit 3 family.</text>
</comment>
<accession>O47696</accession>
<evidence type="ECO:0000250" key="1">
    <source>
        <dbReference type="UniProtKB" id="P00415"/>
    </source>
</evidence>
<evidence type="ECO:0000250" key="2">
    <source>
        <dbReference type="UniProtKB" id="P00420"/>
    </source>
</evidence>
<evidence type="ECO:0000305" key="3"/>
<dbReference type="EC" id="7.1.1.9"/>
<dbReference type="EMBL" id="AF030461">
    <property type="protein sequence ID" value="AAB93600.1"/>
    <property type="molecule type" value="Genomic_DNA"/>
</dbReference>
<dbReference type="SMR" id="O47696"/>
<dbReference type="GO" id="GO:0005743">
    <property type="term" value="C:mitochondrial inner membrane"/>
    <property type="evidence" value="ECO:0007669"/>
    <property type="project" value="UniProtKB-SubCell"/>
</dbReference>
<dbReference type="GO" id="GO:0045277">
    <property type="term" value="C:respiratory chain complex IV"/>
    <property type="evidence" value="ECO:0000250"/>
    <property type="project" value="UniProtKB"/>
</dbReference>
<dbReference type="GO" id="GO:0004129">
    <property type="term" value="F:cytochrome-c oxidase activity"/>
    <property type="evidence" value="ECO:0007669"/>
    <property type="project" value="UniProtKB-EC"/>
</dbReference>
<dbReference type="GO" id="GO:0006123">
    <property type="term" value="P:mitochondrial electron transport, cytochrome c to oxygen"/>
    <property type="evidence" value="ECO:0007669"/>
    <property type="project" value="TreeGrafter"/>
</dbReference>
<dbReference type="GO" id="GO:0008535">
    <property type="term" value="P:respiratory chain complex IV assembly"/>
    <property type="evidence" value="ECO:0000250"/>
    <property type="project" value="UniProtKB"/>
</dbReference>
<dbReference type="CDD" id="cd01665">
    <property type="entry name" value="Cyt_c_Oxidase_III"/>
    <property type="match status" value="1"/>
</dbReference>
<dbReference type="FunFam" id="1.10.287.70:FF:000048">
    <property type="entry name" value="Cytochrome c oxidase subunit 3"/>
    <property type="match status" value="1"/>
</dbReference>
<dbReference type="FunFam" id="1.20.120.80:FF:000002">
    <property type="entry name" value="Cytochrome c oxidase subunit 3"/>
    <property type="match status" value="1"/>
</dbReference>
<dbReference type="Gene3D" id="1.10.287.70">
    <property type="match status" value="1"/>
</dbReference>
<dbReference type="Gene3D" id="1.20.120.80">
    <property type="entry name" value="Cytochrome c oxidase, subunit III, four-helix bundle"/>
    <property type="match status" value="1"/>
</dbReference>
<dbReference type="InterPro" id="IPR024791">
    <property type="entry name" value="Cyt_c/ubiquinol_Oxase_su3"/>
</dbReference>
<dbReference type="InterPro" id="IPR033945">
    <property type="entry name" value="Cyt_c_oxase_su3_dom"/>
</dbReference>
<dbReference type="InterPro" id="IPR000298">
    <property type="entry name" value="Cyt_c_oxidase-like_su3"/>
</dbReference>
<dbReference type="InterPro" id="IPR035973">
    <property type="entry name" value="Cyt_c_oxidase_su3-like_sf"/>
</dbReference>
<dbReference type="InterPro" id="IPR013833">
    <property type="entry name" value="Cyt_c_oxidase_su3_a-hlx"/>
</dbReference>
<dbReference type="PANTHER" id="PTHR11403:SF7">
    <property type="entry name" value="CYTOCHROME C OXIDASE SUBUNIT 3"/>
    <property type="match status" value="1"/>
</dbReference>
<dbReference type="PANTHER" id="PTHR11403">
    <property type="entry name" value="CYTOCHROME C OXIDASE SUBUNIT III"/>
    <property type="match status" value="1"/>
</dbReference>
<dbReference type="Pfam" id="PF00510">
    <property type="entry name" value="COX3"/>
    <property type="match status" value="1"/>
</dbReference>
<dbReference type="SUPFAM" id="SSF81452">
    <property type="entry name" value="Cytochrome c oxidase subunit III-like"/>
    <property type="match status" value="1"/>
</dbReference>
<dbReference type="PROSITE" id="PS50253">
    <property type="entry name" value="COX3"/>
    <property type="match status" value="1"/>
</dbReference>